<reference key="1">
    <citation type="journal article" date="2006" name="Genome Res.">
        <title>Massive genome erosion and functional adaptations provide insights into the symbiotic lifestyle of Sodalis glossinidius in the tsetse host.</title>
        <authorList>
            <person name="Toh H."/>
            <person name="Weiss B.L."/>
            <person name="Perkin S.A.H."/>
            <person name="Yamashita A."/>
            <person name="Oshima K."/>
            <person name="Hattori M."/>
            <person name="Aksoy S."/>
        </authorList>
    </citation>
    <scope>NUCLEOTIDE SEQUENCE [LARGE SCALE GENOMIC DNA]</scope>
    <source>
        <strain>morsitans</strain>
    </source>
</reference>
<accession>Q2NSK6</accession>
<comment type="function">
    <text evidence="1">NDH-1 shuttles electrons from NADH, via FMN and iron-sulfur (Fe-S) centers, to quinones in the respiratory chain. The immediate electron acceptor for the enzyme in this species is believed to be ubiquinone. Couples the redox reaction to proton translocation (for every two electrons transferred, four hydrogen ions are translocated across the cytoplasmic membrane), and thus conserves the redox energy in a proton gradient.</text>
</comment>
<comment type="catalytic activity">
    <reaction evidence="1">
        <text>a quinone + NADH + 5 H(+)(in) = a quinol + NAD(+) + 4 H(+)(out)</text>
        <dbReference type="Rhea" id="RHEA:57888"/>
        <dbReference type="ChEBI" id="CHEBI:15378"/>
        <dbReference type="ChEBI" id="CHEBI:24646"/>
        <dbReference type="ChEBI" id="CHEBI:57540"/>
        <dbReference type="ChEBI" id="CHEBI:57945"/>
        <dbReference type="ChEBI" id="CHEBI:132124"/>
    </reaction>
</comment>
<comment type="cofactor">
    <cofactor evidence="1">
        <name>[4Fe-4S] cluster</name>
        <dbReference type="ChEBI" id="CHEBI:49883"/>
    </cofactor>
    <text evidence="1">Binds 2 [4Fe-4S] clusters per subunit.</text>
</comment>
<comment type="subunit">
    <text evidence="1">NDH-1 is composed of 13 different subunits. Subunits NuoA, H, J, K, L, M, N constitute the membrane sector of the complex.</text>
</comment>
<comment type="subcellular location">
    <subcellularLocation>
        <location evidence="1">Cell inner membrane</location>
        <topology evidence="1">Peripheral membrane protein</topology>
    </subcellularLocation>
</comment>
<comment type="similarity">
    <text evidence="1">Belongs to the complex I 23 kDa subunit family.</text>
</comment>
<dbReference type="EC" id="7.1.1.-" evidence="1"/>
<dbReference type="EMBL" id="AP008232">
    <property type="protein sequence ID" value="BAE74869.1"/>
    <property type="molecule type" value="Genomic_DNA"/>
</dbReference>
<dbReference type="RefSeq" id="WP_011411414.1">
    <property type="nucleotide sequence ID" value="NC_007712.1"/>
</dbReference>
<dbReference type="SMR" id="Q2NSK6"/>
<dbReference type="STRING" id="343509.SG1594"/>
<dbReference type="KEGG" id="sgl:SG1594"/>
<dbReference type="eggNOG" id="COG1143">
    <property type="taxonomic scope" value="Bacteria"/>
</dbReference>
<dbReference type="HOGENOM" id="CLU_067218_4_3_6"/>
<dbReference type="OrthoDB" id="9808559at2"/>
<dbReference type="BioCyc" id="SGLO343509:SGP1_RS14510-MONOMER"/>
<dbReference type="Proteomes" id="UP000001932">
    <property type="component" value="Chromosome"/>
</dbReference>
<dbReference type="GO" id="GO:0005886">
    <property type="term" value="C:plasma membrane"/>
    <property type="evidence" value="ECO:0007669"/>
    <property type="project" value="UniProtKB-SubCell"/>
</dbReference>
<dbReference type="GO" id="GO:0051539">
    <property type="term" value="F:4 iron, 4 sulfur cluster binding"/>
    <property type="evidence" value="ECO:0007669"/>
    <property type="project" value="UniProtKB-KW"/>
</dbReference>
<dbReference type="GO" id="GO:0005506">
    <property type="term" value="F:iron ion binding"/>
    <property type="evidence" value="ECO:0007669"/>
    <property type="project" value="UniProtKB-UniRule"/>
</dbReference>
<dbReference type="GO" id="GO:0050136">
    <property type="term" value="F:NADH:ubiquinone reductase (non-electrogenic) activity"/>
    <property type="evidence" value="ECO:0007669"/>
    <property type="project" value="UniProtKB-UniRule"/>
</dbReference>
<dbReference type="GO" id="GO:0048038">
    <property type="term" value="F:quinone binding"/>
    <property type="evidence" value="ECO:0007669"/>
    <property type="project" value="UniProtKB-KW"/>
</dbReference>
<dbReference type="GO" id="GO:0009060">
    <property type="term" value="P:aerobic respiration"/>
    <property type="evidence" value="ECO:0007669"/>
    <property type="project" value="TreeGrafter"/>
</dbReference>
<dbReference type="FunFam" id="3.30.70.3270:FF:000002">
    <property type="entry name" value="NADH-quinone oxidoreductase subunit I"/>
    <property type="match status" value="1"/>
</dbReference>
<dbReference type="Gene3D" id="3.30.70.3270">
    <property type="match status" value="1"/>
</dbReference>
<dbReference type="HAMAP" id="MF_01351">
    <property type="entry name" value="NDH1_NuoI"/>
    <property type="match status" value="1"/>
</dbReference>
<dbReference type="InterPro" id="IPR017896">
    <property type="entry name" value="4Fe4S_Fe-S-bd"/>
</dbReference>
<dbReference type="InterPro" id="IPR017900">
    <property type="entry name" value="4Fe4S_Fe_S_CS"/>
</dbReference>
<dbReference type="InterPro" id="IPR010226">
    <property type="entry name" value="NADH_quinone_OxRdtase_chainI"/>
</dbReference>
<dbReference type="NCBIfam" id="TIGR01971">
    <property type="entry name" value="NuoI"/>
    <property type="match status" value="1"/>
</dbReference>
<dbReference type="NCBIfam" id="NF004536">
    <property type="entry name" value="PRK05888.1-1"/>
    <property type="match status" value="1"/>
</dbReference>
<dbReference type="PANTHER" id="PTHR10849:SF20">
    <property type="entry name" value="NADH DEHYDROGENASE [UBIQUINONE] IRON-SULFUR PROTEIN 8, MITOCHONDRIAL"/>
    <property type="match status" value="1"/>
</dbReference>
<dbReference type="PANTHER" id="PTHR10849">
    <property type="entry name" value="NADH DEHYDROGENASE UBIQUINONE IRON-SULFUR PROTEIN 8, MITOCHONDRIAL"/>
    <property type="match status" value="1"/>
</dbReference>
<dbReference type="Pfam" id="PF12838">
    <property type="entry name" value="Fer4_7"/>
    <property type="match status" value="1"/>
</dbReference>
<dbReference type="SUPFAM" id="SSF54862">
    <property type="entry name" value="4Fe-4S ferredoxins"/>
    <property type="match status" value="1"/>
</dbReference>
<dbReference type="PROSITE" id="PS00198">
    <property type="entry name" value="4FE4S_FER_1"/>
    <property type="match status" value="2"/>
</dbReference>
<dbReference type="PROSITE" id="PS51379">
    <property type="entry name" value="4FE4S_FER_2"/>
    <property type="match status" value="2"/>
</dbReference>
<gene>
    <name evidence="1" type="primary">nuoI</name>
    <name type="ordered locus">SG1594</name>
</gene>
<keyword id="KW-0004">4Fe-4S</keyword>
<keyword id="KW-0997">Cell inner membrane</keyword>
<keyword id="KW-1003">Cell membrane</keyword>
<keyword id="KW-0408">Iron</keyword>
<keyword id="KW-0411">Iron-sulfur</keyword>
<keyword id="KW-0472">Membrane</keyword>
<keyword id="KW-0479">Metal-binding</keyword>
<keyword id="KW-0520">NAD</keyword>
<keyword id="KW-0874">Quinone</keyword>
<keyword id="KW-0677">Repeat</keyword>
<keyword id="KW-1278">Translocase</keyword>
<keyword id="KW-0830">Ubiquinone</keyword>
<proteinExistence type="inferred from homology"/>
<feature type="chain" id="PRO_0000245749" description="NADH-quinone oxidoreductase subunit I">
    <location>
        <begin position="1"/>
        <end position="180"/>
    </location>
</feature>
<feature type="domain" description="4Fe-4S ferredoxin-type 1" evidence="1">
    <location>
        <begin position="48"/>
        <end position="80"/>
    </location>
</feature>
<feature type="domain" description="4Fe-4S ferredoxin-type 2" evidence="1">
    <location>
        <begin position="90"/>
        <end position="119"/>
    </location>
</feature>
<feature type="binding site" evidence="1">
    <location>
        <position position="60"/>
    </location>
    <ligand>
        <name>[4Fe-4S] cluster</name>
        <dbReference type="ChEBI" id="CHEBI:49883"/>
        <label>1</label>
    </ligand>
</feature>
<feature type="binding site" evidence="1">
    <location>
        <position position="63"/>
    </location>
    <ligand>
        <name>[4Fe-4S] cluster</name>
        <dbReference type="ChEBI" id="CHEBI:49883"/>
        <label>1</label>
    </ligand>
</feature>
<feature type="binding site" evidence="1">
    <location>
        <position position="66"/>
    </location>
    <ligand>
        <name>[4Fe-4S] cluster</name>
        <dbReference type="ChEBI" id="CHEBI:49883"/>
        <label>1</label>
    </ligand>
</feature>
<feature type="binding site" evidence="1">
    <location>
        <position position="70"/>
    </location>
    <ligand>
        <name>[4Fe-4S] cluster</name>
        <dbReference type="ChEBI" id="CHEBI:49883"/>
        <label>2</label>
    </ligand>
</feature>
<feature type="binding site" evidence="1">
    <location>
        <position position="99"/>
    </location>
    <ligand>
        <name>[4Fe-4S] cluster</name>
        <dbReference type="ChEBI" id="CHEBI:49883"/>
        <label>2</label>
    </ligand>
</feature>
<feature type="binding site" evidence="1">
    <location>
        <position position="102"/>
    </location>
    <ligand>
        <name>[4Fe-4S] cluster</name>
        <dbReference type="ChEBI" id="CHEBI:49883"/>
        <label>2</label>
    </ligand>
</feature>
<feature type="binding site" evidence="1">
    <location>
        <position position="105"/>
    </location>
    <ligand>
        <name>[4Fe-4S] cluster</name>
        <dbReference type="ChEBI" id="CHEBI:49883"/>
        <label>2</label>
    </ligand>
</feature>
<feature type="binding site" evidence="1">
    <location>
        <position position="109"/>
    </location>
    <ligand>
        <name>[4Fe-4S] cluster</name>
        <dbReference type="ChEBI" id="CHEBI:49883"/>
        <label>1</label>
    </ligand>
</feature>
<name>NUOI_SODGM</name>
<protein>
    <recommendedName>
        <fullName evidence="1">NADH-quinone oxidoreductase subunit I</fullName>
        <ecNumber evidence="1">7.1.1.-</ecNumber>
    </recommendedName>
    <alternativeName>
        <fullName evidence="1">NADH dehydrogenase I subunit I</fullName>
    </alternativeName>
    <alternativeName>
        <fullName evidence="1">NDH-1 subunit I</fullName>
    </alternativeName>
</protein>
<evidence type="ECO:0000255" key="1">
    <source>
        <dbReference type="HAMAP-Rule" id="MF_01351"/>
    </source>
</evidence>
<sequence>MTLKELAIGCGTTLRSIWMIGMQAFNKRETRMYPDVPVNPPPRFRGRIVLTRDPDGDERCVACNLCAVACPVDCISLQKAETKDGRWYPEFFRINFSRCIFCGLCEEACPTTAIQLTPDFEMGEFKRQDLVYEKDDLLISGPGKYPEYNFYRMAGMAIAGKDKGEAENEAKPIDVKGLLP</sequence>
<organism>
    <name type="scientific">Sodalis glossinidius (strain morsitans)</name>
    <dbReference type="NCBI Taxonomy" id="343509"/>
    <lineage>
        <taxon>Bacteria</taxon>
        <taxon>Pseudomonadati</taxon>
        <taxon>Pseudomonadota</taxon>
        <taxon>Gammaproteobacteria</taxon>
        <taxon>Enterobacterales</taxon>
        <taxon>Bruguierivoracaceae</taxon>
        <taxon>Sodalis</taxon>
    </lineage>
</organism>